<feature type="chain" id="PRO_0000232431" description="Protein NDRG3">
    <location>
        <begin position="1"/>
        <end position="387"/>
    </location>
</feature>
<feature type="region of interest" description="Disordered" evidence="2">
    <location>
        <begin position="329"/>
        <end position="387"/>
    </location>
</feature>
<feature type="compositionally biased region" description="Low complexity" evidence="2">
    <location>
        <begin position="359"/>
        <end position="377"/>
    </location>
</feature>
<sequence length="387" mass="42543">MEELQDVQLTEIKPLLTDKGSGQHFEDFDGQEHNIETAFGVVHVTMSGNARGNRPVLLTFHDIGLNHKSCFNSFFNFDDMHEITQHFAVCHIDAPGQQEGAPSFPTGYQYPTMDELAEMLCAVLTHLNLRSIIGIGVGAGAYVLSRFALNNPLLVEGLVLINIDPCAKGWIDWAASKLSFWTSNIVEIVLGQLFGDEELQSNLDLVQTYRLHIAQDINQDNLQLFVTSYNSRKDLEIERPIFGSSTPTNTIKCPVLLVVGDSSPAVDAVVECNSRLDPTRTTLLKMADCGGLPQAVQPGKLTEAIKYFVQGMGYIPHVQLSHLSTESVPSASMTRLVRSRTHSASSSGSMEMPRSRSHTSNAQLQSTSNNSLSNQIQETPHTIELSC</sequence>
<name>NDRG3_XENTR</name>
<accession>Q6DFS4</accession>
<keyword id="KW-1185">Reference proteome</keyword>
<comment type="similarity">
    <text evidence="1">Belongs to the NDRG family.</text>
</comment>
<protein>
    <recommendedName>
        <fullName>Protein NDRG3</fullName>
    </recommendedName>
</protein>
<reference evidence="3" key="1">
    <citation type="submission" date="2004-07" db="EMBL/GenBank/DDBJ databases">
        <authorList>
            <consortium name="NIH - Xenopus Gene Collection (XGC) project"/>
        </authorList>
    </citation>
    <scope>NUCLEOTIDE SEQUENCE [LARGE SCALE MRNA]</scope>
    <source>
        <tissue evidence="3">Embryo</tissue>
    </source>
</reference>
<gene>
    <name evidence="3" type="primary">ndrg3</name>
</gene>
<dbReference type="EMBL" id="BC076659">
    <property type="protein sequence ID" value="AAH76659.1"/>
    <property type="molecule type" value="mRNA"/>
</dbReference>
<dbReference type="RefSeq" id="NP_001006794.1">
    <property type="nucleotide sequence ID" value="NM_001006793.1"/>
</dbReference>
<dbReference type="RefSeq" id="XP_012827114.1">
    <property type="nucleotide sequence ID" value="XM_012971660.3"/>
</dbReference>
<dbReference type="SMR" id="Q6DFS4"/>
<dbReference type="FunCoup" id="Q6DFS4">
    <property type="interactions" value="1062"/>
</dbReference>
<dbReference type="STRING" id="8364.ENSXETP00000001462"/>
<dbReference type="ESTHER" id="xentr-ndrg3">
    <property type="family name" value="Ndr_family"/>
</dbReference>
<dbReference type="MEROPS" id="S33.987"/>
<dbReference type="PaxDb" id="8364-ENSXETP00000062596"/>
<dbReference type="DNASU" id="448498"/>
<dbReference type="GeneID" id="448498"/>
<dbReference type="KEGG" id="xtr:448498"/>
<dbReference type="AGR" id="Xenbase:XB-GENE-5757269"/>
<dbReference type="CTD" id="57446"/>
<dbReference type="Xenbase" id="XB-GENE-5757269">
    <property type="gene designation" value="ndrg3"/>
</dbReference>
<dbReference type="eggNOG" id="KOG2931">
    <property type="taxonomic scope" value="Eukaryota"/>
</dbReference>
<dbReference type="InParanoid" id="Q6DFS4"/>
<dbReference type="OMA" id="LQGEGYC"/>
<dbReference type="OrthoDB" id="741027at2759"/>
<dbReference type="PhylomeDB" id="Q6DFS4"/>
<dbReference type="Proteomes" id="UP000008143">
    <property type="component" value="Chromosome 10"/>
</dbReference>
<dbReference type="Bgee" id="ENSXETG00000009993">
    <property type="expression patterns" value="Expressed in pronephros and 36 other cell types or tissues"/>
</dbReference>
<dbReference type="ExpressionAtlas" id="Q6DFS4">
    <property type="expression patterns" value="baseline"/>
</dbReference>
<dbReference type="FunFam" id="3.40.50.1820:FF:000006">
    <property type="entry name" value="NDRG family member 3"/>
    <property type="match status" value="1"/>
</dbReference>
<dbReference type="Gene3D" id="3.40.50.1820">
    <property type="entry name" value="alpha/beta hydrolase"/>
    <property type="match status" value="1"/>
</dbReference>
<dbReference type="InterPro" id="IPR029058">
    <property type="entry name" value="AB_hydrolase_fold"/>
</dbReference>
<dbReference type="InterPro" id="IPR004142">
    <property type="entry name" value="NDRG"/>
</dbReference>
<dbReference type="PANTHER" id="PTHR11034">
    <property type="entry name" value="N-MYC DOWNSTREAM REGULATED"/>
    <property type="match status" value="1"/>
</dbReference>
<dbReference type="Pfam" id="PF03096">
    <property type="entry name" value="Ndr"/>
    <property type="match status" value="1"/>
</dbReference>
<dbReference type="SUPFAM" id="SSF53474">
    <property type="entry name" value="alpha/beta-Hydrolases"/>
    <property type="match status" value="1"/>
</dbReference>
<evidence type="ECO:0000255" key="1"/>
<evidence type="ECO:0000256" key="2">
    <source>
        <dbReference type="SAM" id="MobiDB-lite"/>
    </source>
</evidence>
<evidence type="ECO:0000312" key="3">
    <source>
        <dbReference type="EMBL" id="AAH76659.1"/>
    </source>
</evidence>
<organism>
    <name type="scientific">Xenopus tropicalis</name>
    <name type="common">Western clawed frog</name>
    <name type="synonym">Silurana tropicalis</name>
    <dbReference type="NCBI Taxonomy" id="8364"/>
    <lineage>
        <taxon>Eukaryota</taxon>
        <taxon>Metazoa</taxon>
        <taxon>Chordata</taxon>
        <taxon>Craniata</taxon>
        <taxon>Vertebrata</taxon>
        <taxon>Euteleostomi</taxon>
        <taxon>Amphibia</taxon>
        <taxon>Batrachia</taxon>
        <taxon>Anura</taxon>
        <taxon>Pipoidea</taxon>
        <taxon>Pipidae</taxon>
        <taxon>Xenopodinae</taxon>
        <taxon>Xenopus</taxon>
        <taxon>Silurana</taxon>
    </lineage>
</organism>
<proteinExistence type="evidence at transcript level"/>